<keyword id="KW-0066">ATP synthesis</keyword>
<keyword id="KW-0997">Cell inner membrane</keyword>
<keyword id="KW-1003">Cell membrane</keyword>
<keyword id="KW-0139">CF(1)</keyword>
<keyword id="KW-0375">Hydrogen ion transport</keyword>
<keyword id="KW-0406">Ion transport</keyword>
<keyword id="KW-0472">Membrane</keyword>
<keyword id="KW-1185">Reference proteome</keyword>
<keyword id="KW-0813">Transport</keyword>
<feature type="chain" id="PRO_0000265826" description="ATP synthase epsilon chain">
    <location>
        <begin position="1"/>
        <end position="132"/>
    </location>
</feature>
<name>ATPE_JANSC</name>
<reference key="1">
    <citation type="submission" date="2006-02" db="EMBL/GenBank/DDBJ databases">
        <title>Complete sequence of chromosome of Jannaschia sp. CCS1.</title>
        <authorList>
            <consortium name="US DOE Joint Genome Institute"/>
            <person name="Copeland A."/>
            <person name="Lucas S."/>
            <person name="Lapidus A."/>
            <person name="Barry K."/>
            <person name="Detter J.C."/>
            <person name="Glavina del Rio T."/>
            <person name="Hammon N."/>
            <person name="Israni S."/>
            <person name="Pitluck S."/>
            <person name="Brettin T."/>
            <person name="Bruce D."/>
            <person name="Han C."/>
            <person name="Tapia R."/>
            <person name="Gilna P."/>
            <person name="Chertkov O."/>
            <person name="Saunders E."/>
            <person name="Schmutz J."/>
            <person name="Larimer F."/>
            <person name="Land M."/>
            <person name="Kyrpides N."/>
            <person name="Lykidis A."/>
            <person name="Moran M.A."/>
            <person name="Belas R."/>
            <person name="Ye W."/>
            <person name="Buchan A."/>
            <person name="Gonzalez J.M."/>
            <person name="Schell M.A."/>
            <person name="Richardson P."/>
        </authorList>
    </citation>
    <scope>NUCLEOTIDE SEQUENCE [LARGE SCALE GENOMIC DNA]</scope>
    <source>
        <strain>CCS1</strain>
    </source>
</reference>
<sequence>MATMQFDLVSPERRLASMEVTEVQIPGADGDLTAMPDHSPMITTLRPGVLKVSGAEGEKSYFVTGGFADIAGPSATILAERAMPVEEVTGEIVEELIKASEEQKSAASDGAADAAAKYHADLTMTLDAIVGR</sequence>
<protein>
    <recommendedName>
        <fullName evidence="1">ATP synthase epsilon chain</fullName>
    </recommendedName>
    <alternativeName>
        <fullName evidence="1">ATP synthase F1 sector epsilon subunit</fullName>
    </alternativeName>
    <alternativeName>
        <fullName evidence="1">F-ATPase epsilon subunit</fullName>
    </alternativeName>
</protein>
<dbReference type="EMBL" id="CP000264">
    <property type="protein sequence ID" value="ABD53967.1"/>
    <property type="molecule type" value="Genomic_DNA"/>
</dbReference>
<dbReference type="RefSeq" id="WP_011454174.1">
    <property type="nucleotide sequence ID" value="NC_007802.1"/>
</dbReference>
<dbReference type="SMR" id="Q28TJ5"/>
<dbReference type="STRING" id="290400.Jann_1050"/>
<dbReference type="KEGG" id="jan:Jann_1050"/>
<dbReference type="eggNOG" id="COG0355">
    <property type="taxonomic scope" value="Bacteria"/>
</dbReference>
<dbReference type="HOGENOM" id="CLU_084338_2_1_5"/>
<dbReference type="OrthoDB" id="9799969at2"/>
<dbReference type="Proteomes" id="UP000008326">
    <property type="component" value="Chromosome"/>
</dbReference>
<dbReference type="GO" id="GO:0005886">
    <property type="term" value="C:plasma membrane"/>
    <property type="evidence" value="ECO:0007669"/>
    <property type="project" value="UniProtKB-SubCell"/>
</dbReference>
<dbReference type="GO" id="GO:0045259">
    <property type="term" value="C:proton-transporting ATP synthase complex"/>
    <property type="evidence" value="ECO:0007669"/>
    <property type="project" value="UniProtKB-KW"/>
</dbReference>
<dbReference type="GO" id="GO:0005524">
    <property type="term" value="F:ATP binding"/>
    <property type="evidence" value="ECO:0007669"/>
    <property type="project" value="UniProtKB-UniRule"/>
</dbReference>
<dbReference type="GO" id="GO:0046933">
    <property type="term" value="F:proton-transporting ATP synthase activity, rotational mechanism"/>
    <property type="evidence" value="ECO:0007669"/>
    <property type="project" value="UniProtKB-UniRule"/>
</dbReference>
<dbReference type="CDD" id="cd12152">
    <property type="entry name" value="F1-ATPase_delta"/>
    <property type="match status" value="1"/>
</dbReference>
<dbReference type="Gene3D" id="2.60.15.10">
    <property type="entry name" value="F0F1 ATP synthase delta/epsilon subunit, N-terminal"/>
    <property type="match status" value="1"/>
</dbReference>
<dbReference type="HAMAP" id="MF_00530">
    <property type="entry name" value="ATP_synth_epsil_bac"/>
    <property type="match status" value="1"/>
</dbReference>
<dbReference type="InterPro" id="IPR001469">
    <property type="entry name" value="ATP_synth_F1_dsu/esu"/>
</dbReference>
<dbReference type="InterPro" id="IPR020546">
    <property type="entry name" value="ATP_synth_F1_dsu/esu_N"/>
</dbReference>
<dbReference type="InterPro" id="IPR036771">
    <property type="entry name" value="ATPsynth_dsu/esu_N"/>
</dbReference>
<dbReference type="NCBIfam" id="TIGR01216">
    <property type="entry name" value="ATP_synt_epsi"/>
    <property type="match status" value="1"/>
</dbReference>
<dbReference type="NCBIfam" id="NF009978">
    <property type="entry name" value="PRK13443.1"/>
    <property type="match status" value="1"/>
</dbReference>
<dbReference type="PANTHER" id="PTHR13822">
    <property type="entry name" value="ATP SYNTHASE DELTA/EPSILON CHAIN"/>
    <property type="match status" value="1"/>
</dbReference>
<dbReference type="PANTHER" id="PTHR13822:SF10">
    <property type="entry name" value="ATP SYNTHASE EPSILON CHAIN, CHLOROPLASTIC"/>
    <property type="match status" value="1"/>
</dbReference>
<dbReference type="Pfam" id="PF02823">
    <property type="entry name" value="ATP-synt_DE_N"/>
    <property type="match status" value="1"/>
</dbReference>
<dbReference type="SUPFAM" id="SSF51344">
    <property type="entry name" value="Epsilon subunit of F1F0-ATP synthase N-terminal domain"/>
    <property type="match status" value="1"/>
</dbReference>
<accession>Q28TJ5</accession>
<organism>
    <name type="scientific">Jannaschia sp. (strain CCS1)</name>
    <dbReference type="NCBI Taxonomy" id="290400"/>
    <lineage>
        <taxon>Bacteria</taxon>
        <taxon>Pseudomonadati</taxon>
        <taxon>Pseudomonadota</taxon>
        <taxon>Alphaproteobacteria</taxon>
        <taxon>Rhodobacterales</taxon>
        <taxon>Roseobacteraceae</taxon>
        <taxon>Jannaschia</taxon>
    </lineage>
</organism>
<comment type="function">
    <text evidence="1">Produces ATP from ADP in the presence of a proton gradient across the membrane.</text>
</comment>
<comment type="subunit">
    <text>F-type ATPases have 2 components, CF(1) - the catalytic core - and CF(0) - the membrane proton channel. CF(1) has five subunits: alpha(3), beta(3), gamma(1), delta(1), epsilon(1). CF(0) has three main subunits: a, b and c.</text>
</comment>
<comment type="subcellular location">
    <subcellularLocation>
        <location evidence="1">Cell inner membrane</location>
        <topology evidence="1">Peripheral membrane protein</topology>
    </subcellularLocation>
</comment>
<comment type="similarity">
    <text evidence="1">Belongs to the ATPase epsilon chain family.</text>
</comment>
<proteinExistence type="inferred from homology"/>
<evidence type="ECO:0000255" key="1">
    <source>
        <dbReference type="HAMAP-Rule" id="MF_00530"/>
    </source>
</evidence>
<gene>
    <name evidence="1" type="primary">atpC</name>
    <name type="ordered locus">Jann_1050</name>
</gene>